<evidence type="ECO:0000255" key="1">
    <source>
        <dbReference type="HAMAP-Rule" id="MF_00089"/>
    </source>
</evidence>
<evidence type="ECO:0000256" key="2">
    <source>
        <dbReference type="SAM" id="MobiDB-lite"/>
    </source>
</evidence>
<dbReference type="EC" id="4.1.99.17" evidence="1"/>
<dbReference type="EMBL" id="CP000267">
    <property type="protein sequence ID" value="ABD69437.1"/>
    <property type="molecule type" value="Genomic_DNA"/>
</dbReference>
<dbReference type="RefSeq" id="WP_011464005.1">
    <property type="nucleotide sequence ID" value="NC_007908.1"/>
</dbReference>
<dbReference type="SMR" id="Q21XR6"/>
<dbReference type="STRING" id="338969.Rfer_1708"/>
<dbReference type="KEGG" id="rfr:Rfer_1708"/>
<dbReference type="eggNOG" id="COG0422">
    <property type="taxonomic scope" value="Bacteria"/>
</dbReference>
<dbReference type="HOGENOM" id="CLU_013181_2_1_4"/>
<dbReference type="OrthoDB" id="9805897at2"/>
<dbReference type="UniPathway" id="UPA00060"/>
<dbReference type="Proteomes" id="UP000008332">
    <property type="component" value="Chromosome"/>
</dbReference>
<dbReference type="GO" id="GO:0005829">
    <property type="term" value="C:cytosol"/>
    <property type="evidence" value="ECO:0007669"/>
    <property type="project" value="TreeGrafter"/>
</dbReference>
<dbReference type="GO" id="GO:0051539">
    <property type="term" value="F:4 iron, 4 sulfur cluster binding"/>
    <property type="evidence" value="ECO:0007669"/>
    <property type="project" value="UniProtKB-KW"/>
</dbReference>
<dbReference type="GO" id="GO:0016830">
    <property type="term" value="F:carbon-carbon lyase activity"/>
    <property type="evidence" value="ECO:0007669"/>
    <property type="project" value="InterPro"/>
</dbReference>
<dbReference type="GO" id="GO:0008270">
    <property type="term" value="F:zinc ion binding"/>
    <property type="evidence" value="ECO:0007669"/>
    <property type="project" value="UniProtKB-UniRule"/>
</dbReference>
<dbReference type="GO" id="GO:0009228">
    <property type="term" value="P:thiamine biosynthetic process"/>
    <property type="evidence" value="ECO:0007669"/>
    <property type="project" value="UniProtKB-KW"/>
</dbReference>
<dbReference type="GO" id="GO:0009229">
    <property type="term" value="P:thiamine diphosphate biosynthetic process"/>
    <property type="evidence" value="ECO:0007669"/>
    <property type="project" value="UniProtKB-UniRule"/>
</dbReference>
<dbReference type="FunFam" id="3.20.20.540:FF:000001">
    <property type="entry name" value="Phosphomethylpyrimidine synthase"/>
    <property type="match status" value="1"/>
</dbReference>
<dbReference type="Gene3D" id="6.10.250.620">
    <property type="match status" value="1"/>
</dbReference>
<dbReference type="Gene3D" id="3.20.20.540">
    <property type="entry name" value="Radical SAM ThiC family, central domain"/>
    <property type="match status" value="1"/>
</dbReference>
<dbReference type="HAMAP" id="MF_00089">
    <property type="entry name" value="ThiC"/>
    <property type="match status" value="1"/>
</dbReference>
<dbReference type="InterPro" id="IPR037509">
    <property type="entry name" value="ThiC"/>
</dbReference>
<dbReference type="InterPro" id="IPR025747">
    <property type="entry name" value="ThiC-associated_dom"/>
</dbReference>
<dbReference type="InterPro" id="IPR038521">
    <property type="entry name" value="ThiC/Bza_core_dom"/>
</dbReference>
<dbReference type="InterPro" id="IPR002817">
    <property type="entry name" value="ThiC/BzaA/B"/>
</dbReference>
<dbReference type="NCBIfam" id="NF006763">
    <property type="entry name" value="PRK09284.1"/>
    <property type="match status" value="1"/>
</dbReference>
<dbReference type="NCBIfam" id="NF009895">
    <property type="entry name" value="PRK13352.1"/>
    <property type="match status" value="1"/>
</dbReference>
<dbReference type="NCBIfam" id="TIGR00190">
    <property type="entry name" value="thiC"/>
    <property type="match status" value="1"/>
</dbReference>
<dbReference type="PANTHER" id="PTHR30557:SF1">
    <property type="entry name" value="PHOSPHOMETHYLPYRIMIDINE SYNTHASE, CHLOROPLASTIC"/>
    <property type="match status" value="1"/>
</dbReference>
<dbReference type="PANTHER" id="PTHR30557">
    <property type="entry name" value="THIAMINE BIOSYNTHESIS PROTEIN THIC"/>
    <property type="match status" value="1"/>
</dbReference>
<dbReference type="Pfam" id="PF13667">
    <property type="entry name" value="ThiC-associated"/>
    <property type="match status" value="1"/>
</dbReference>
<dbReference type="Pfam" id="PF01964">
    <property type="entry name" value="ThiC_Rad_SAM"/>
    <property type="match status" value="1"/>
</dbReference>
<dbReference type="SFLD" id="SFLDF00407">
    <property type="entry name" value="phosphomethylpyrimidine_syntha"/>
    <property type="match status" value="1"/>
</dbReference>
<dbReference type="SFLD" id="SFLDG01114">
    <property type="entry name" value="phosphomethylpyrimidine_syntha"/>
    <property type="match status" value="1"/>
</dbReference>
<dbReference type="SFLD" id="SFLDS00113">
    <property type="entry name" value="Radical_SAM_Phosphomethylpyrim"/>
    <property type="match status" value="1"/>
</dbReference>
<sequence length="624" mass="69040">MNAPDKFSQLMSLTREPLPASRKIYVPGTQADIQVPMREIMQSNGEAVVVYDTSGPYTDPNANIDVRQGLPSVRSPWIESRGDTESYTGRTPFALDDGLKNGDSESLASLRVQAAGLQRTPRRAKAGANVSQMHYARSGIITPEMEYVAIRENQKLAWMEQYLGNAEREARLAGNSFGANIPKIMTPEFVRDEVARGRAIIPANINHPEVEPMVIGRNFLVKINANIGNSAVTSSIEEEVEKLVWSMRWGADTVMDLSTGRNIHTTRDWILRNSPVPIGTVPIYQALEKVGGVAEDLTWAIFRDTLIEQAEQGVDYFTVHAGVRLAFIHLTANRMTGIVSRGGSIMAKWCIAHHKENFIYSHFDEMTEILKAYDVSYSLGDGLRPGSGADANDEAQFAELRTLGELTQQAWQQDVQVMIEGPGHVPMHMVQANMTEQLKACHEAPFYTLGPLTTDIAPGYDHITSGIGAAMIGWFGTAMLCYVTPKEHLGLPDRDDVKVGIITYKIAAHVADVAKGHPGVRARDDALSKARFEFRWMDQFNLSLDPDTARNFHDETLPKDSSKVAHFCSMCGPKFCSMKISQEVRDYAKTRGVSEEQALQSGMQTKSEEFRLAGGEMYIPISPA</sequence>
<name>THIC_ALBFT</name>
<feature type="chain" id="PRO_0000242295" description="Phosphomethylpyrimidine synthase">
    <location>
        <begin position="1"/>
        <end position="624"/>
    </location>
</feature>
<feature type="region of interest" description="Disordered" evidence="2">
    <location>
        <begin position="75"/>
        <end position="99"/>
    </location>
</feature>
<feature type="binding site" evidence="1">
    <location>
        <position position="226"/>
    </location>
    <ligand>
        <name>substrate</name>
    </ligand>
</feature>
<feature type="binding site" evidence="1">
    <location>
        <position position="255"/>
    </location>
    <ligand>
        <name>substrate</name>
    </ligand>
</feature>
<feature type="binding site" evidence="1">
    <location>
        <position position="284"/>
    </location>
    <ligand>
        <name>substrate</name>
    </ligand>
</feature>
<feature type="binding site" evidence="1">
    <location>
        <position position="320"/>
    </location>
    <ligand>
        <name>substrate</name>
    </ligand>
</feature>
<feature type="binding site" evidence="1">
    <location>
        <begin position="340"/>
        <end position="342"/>
    </location>
    <ligand>
        <name>substrate</name>
    </ligand>
</feature>
<feature type="binding site" evidence="1">
    <location>
        <begin position="381"/>
        <end position="384"/>
    </location>
    <ligand>
        <name>substrate</name>
    </ligand>
</feature>
<feature type="binding site" evidence="1">
    <location>
        <position position="420"/>
    </location>
    <ligand>
        <name>substrate</name>
    </ligand>
</feature>
<feature type="binding site" evidence="1">
    <location>
        <position position="424"/>
    </location>
    <ligand>
        <name>Zn(2+)</name>
        <dbReference type="ChEBI" id="CHEBI:29105"/>
    </ligand>
</feature>
<feature type="binding site" evidence="1">
    <location>
        <position position="447"/>
    </location>
    <ligand>
        <name>substrate</name>
    </ligand>
</feature>
<feature type="binding site" evidence="1">
    <location>
        <position position="488"/>
    </location>
    <ligand>
        <name>Zn(2+)</name>
        <dbReference type="ChEBI" id="CHEBI:29105"/>
    </ligand>
</feature>
<feature type="binding site" evidence="1">
    <location>
        <position position="568"/>
    </location>
    <ligand>
        <name>[4Fe-4S] cluster</name>
        <dbReference type="ChEBI" id="CHEBI:49883"/>
        <note>4Fe-4S-S-AdoMet</note>
    </ligand>
</feature>
<feature type="binding site" evidence="1">
    <location>
        <position position="571"/>
    </location>
    <ligand>
        <name>[4Fe-4S] cluster</name>
        <dbReference type="ChEBI" id="CHEBI:49883"/>
        <note>4Fe-4S-S-AdoMet</note>
    </ligand>
</feature>
<feature type="binding site" evidence="1">
    <location>
        <position position="576"/>
    </location>
    <ligand>
        <name>[4Fe-4S] cluster</name>
        <dbReference type="ChEBI" id="CHEBI:49883"/>
        <note>4Fe-4S-S-AdoMet</note>
    </ligand>
</feature>
<gene>
    <name evidence="1" type="primary">thiC</name>
    <name type="ordered locus">Rfer_1708</name>
</gene>
<organism>
    <name type="scientific">Albidiferax ferrireducens (strain ATCC BAA-621 / DSM 15236 / T118)</name>
    <name type="common">Rhodoferax ferrireducens</name>
    <dbReference type="NCBI Taxonomy" id="338969"/>
    <lineage>
        <taxon>Bacteria</taxon>
        <taxon>Pseudomonadati</taxon>
        <taxon>Pseudomonadota</taxon>
        <taxon>Betaproteobacteria</taxon>
        <taxon>Burkholderiales</taxon>
        <taxon>Comamonadaceae</taxon>
        <taxon>Rhodoferax</taxon>
    </lineage>
</organism>
<accession>Q21XR6</accession>
<comment type="function">
    <text evidence="1">Catalyzes the synthesis of the hydroxymethylpyrimidine phosphate (HMP-P) moiety of thiamine from aminoimidazole ribotide (AIR) in a radical S-adenosyl-L-methionine (SAM)-dependent reaction.</text>
</comment>
<comment type="catalytic activity">
    <reaction evidence="1">
        <text>5-amino-1-(5-phospho-beta-D-ribosyl)imidazole + S-adenosyl-L-methionine = 4-amino-2-methyl-5-(phosphooxymethyl)pyrimidine + CO + 5'-deoxyadenosine + formate + L-methionine + 3 H(+)</text>
        <dbReference type="Rhea" id="RHEA:24840"/>
        <dbReference type="ChEBI" id="CHEBI:15378"/>
        <dbReference type="ChEBI" id="CHEBI:15740"/>
        <dbReference type="ChEBI" id="CHEBI:17245"/>
        <dbReference type="ChEBI" id="CHEBI:17319"/>
        <dbReference type="ChEBI" id="CHEBI:57844"/>
        <dbReference type="ChEBI" id="CHEBI:58354"/>
        <dbReference type="ChEBI" id="CHEBI:59789"/>
        <dbReference type="ChEBI" id="CHEBI:137981"/>
        <dbReference type="EC" id="4.1.99.17"/>
    </reaction>
</comment>
<comment type="cofactor">
    <cofactor evidence="1">
        <name>[4Fe-4S] cluster</name>
        <dbReference type="ChEBI" id="CHEBI:49883"/>
    </cofactor>
    <text evidence="1">Binds 1 [4Fe-4S] cluster per subunit. The cluster is coordinated with 3 cysteines and an exchangeable S-adenosyl-L-methionine.</text>
</comment>
<comment type="pathway">
    <text evidence="1">Cofactor biosynthesis; thiamine diphosphate biosynthesis.</text>
</comment>
<comment type="subunit">
    <text evidence="1">Homodimer.</text>
</comment>
<comment type="similarity">
    <text evidence="1">Belongs to the ThiC family.</text>
</comment>
<proteinExistence type="inferred from homology"/>
<protein>
    <recommendedName>
        <fullName evidence="1">Phosphomethylpyrimidine synthase</fullName>
        <ecNumber evidence="1">4.1.99.17</ecNumber>
    </recommendedName>
    <alternativeName>
        <fullName evidence="1">Hydroxymethylpyrimidine phosphate synthase</fullName>
        <shortName evidence="1">HMP-P synthase</shortName>
        <shortName evidence="1">HMP-phosphate synthase</shortName>
        <shortName evidence="1">HMPP synthase</shortName>
    </alternativeName>
    <alternativeName>
        <fullName evidence="1">Thiamine biosynthesis protein ThiC</fullName>
    </alternativeName>
</protein>
<reference key="1">
    <citation type="submission" date="2006-02" db="EMBL/GenBank/DDBJ databases">
        <title>Complete sequence of chromosome of Rhodoferax ferrireducens DSM 15236.</title>
        <authorList>
            <person name="Copeland A."/>
            <person name="Lucas S."/>
            <person name="Lapidus A."/>
            <person name="Barry K."/>
            <person name="Detter J.C."/>
            <person name="Glavina del Rio T."/>
            <person name="Hammon N."/>
            <person name="Israni S."/>
            <person name="Pitluck S."/>
            <person name="Brettin T."/>
            <person name="Bruce D."/>
            <person name="Han C."/>
            <person name="Tapia R."/>
            <person name="Gilna P."/>
            <person name="Kiss H."/>
            <person name="Schmutz J."/>
            <person name="Larimer F."/>
            <person name="Land M."/>
            <person name="Kyrpides N."/>
            <person name="Ivanova N."/>
            <person name="Richardson P."/>
        </authorList>
    </citation>
    <scope>NUCLEOTIDE SEQUENCE [LARGE SCALE GENOMIC DNA]</scope>
    <source>
        <strain>ATCC BAA-621 / DSM 15236 / T118</strain>
    </source>
</reference>
<keyword id="KW-0004">4Fe-4S</keyword>
<keyword id="KW-0408">Iron</keyword>
<keyword id="KW-0411">Iron-sulfur</keyword>
<keyword id="KW-0456">Lyase</keyword>
<keyword id="KW-0479">Metal-binding</keyword>
<keyword id="KW-1185">Reference proteome</keyword>
<keyword id="KW-0949">S-adenosyl-L-methionine</keyword>
<keyword id="KW-0784">Thiamine biosynthesis</keyword>
<keyword id="KW-0862">Zinc</keyword>